<reference key="1">
    <citation type="submission" date="2001-04" db="EMBL/GenBank/DDBJ databases">
        <title>Isolation of full-length cDNA clones from macaque brain cDNA libraries.</title>
        <authorList>
            <person name="Osada N."/>
            <person name="Hida M."/>
            <person name="Kusuda J."/>
            <person name="Tanuma R."/>
            <person name="Iseki K."/>
            <person name="Hirai M."/>
            <person name="Terao K."/>
            <person name="Suzuki Y."/>
            <person name="Sugano S."/>
            <person name="Hashimoto K."/>
        </authorList>
    </citation>
    <scope>NUCLEOTIDE SEQUENCE [LARGE SCALE MRNA]</scope>
    <source>
        <tissue>Temporal cortex</tissue>
    </source>
</reference>
<feature type="signal peptide" evidence="1">
    <location>
        <begin position="1"/>
        <end position="29"/>
    </location>
</feature>
<feature type="chain" id="PRO_0000014753" description="Endothelial cell-selective adhesion molecule">
    <location>
        <begin position="30"/>
        <end position="390"/>
    </location>
</feature>
<feature type="topological domain" description="Extracellular" evidence="4">
    <location>
        <begin position="30"/>
        <end position="248"/>
    </location>
</feature>
<feature type="transmembrane region" description="Helical" evidence="4">
    <location>
        <begin position="249"/>
        <end position="269"/>
    </location>
</feature>
<feature type="topological domain" description="Cytoplasmic" evidence="4">
    <location>
        <begin position="270"/>
        <end position="390"/>
    </location>
</feature>
<feature type="domain" description="Ig-like V-type">
    <location>
        <begin position="30"/>
        <end position="143"/>
    </location>
</feature>
<feature type="domain" description="Ig-like C2-type">
    <location>
        <begin position="156"/>
        <end position="242"/>
    </location>
</feature>
<feature type="region of interest" description="Disordered" evidence="6">
    <location>
        <begin position="316"/>
        <end position="365"/>
    </location>
</feature>
<feature type="compositionally biased region" description="Polar residues" evidence="6">
    <location>
        <begin position="333"/>
        <end position="342"/>
    </location>
</feature>
<feature type="modified residue" description="Phosphoserine" evidence="2">
    <location>
        <position position="301"/>
    </location>
</feature>
<feature type="modified residue" description="Phosphothreonine" evidence="2">
    <location>
        <position position="332"/>
    </location>
</feature>
<feature type="modified residue" description="Phosphothreonine" evidence="2">
    <location>
        <position position="334"/>
    </location>
</feature>
<feature type="modified residue" description="Phosphoserine" evidence="2">
    <location>
        <position position="336"/>
    </location>
</feature>
<feature type="modified residue" description="Phosphoserine" evidence="2">
    <location>
        <position position="339"/>
    </location>
</feature>
<feature type="modified residue" description="Phosphoserine" evidence="2">
    <location>
        <position position="344"/>
    </location>
</feature>
<feature type="modified residue" description="Phosphoserine" evidence="2">
    <location>
        <position position="371"/>
    </location>
</feature>
<feature type="glycosylation site" description="N-linked (GlcNAc...) asparagine" evidence="4">
    <location>
        <position position="108"/>
    </location>
</feature>
<feature type="glycosylation site" description="N-linked (GlcNAc...) asparagine" evidence="4">
    <location>
        <position position="169"/>
    </location>
</feature>
<feature type="glycosylation site" description="N-linked (GlcNAc...) asparagine" evidence="4">
    <location>
        <position position="213"/>
    </location>
</feature>
<feature type="glycosylation site" description="N-linked (GlcNAc...) asparagine" evidence="4">
    <location>
        <position position="236"/>
    </location>
</feature>
<feature type="disulfide bond" evidence="5">
    <location>
        <begin position="174"/>
        <end position="224"/>
    </location>
</feature>
<name>ESAM_MACFA</name>
<evidence type="ECO:0000250" key="1"/>
<evidence type="ECO:0000250" key="2">
    <source>
        <dbReference type="UniProtKB" id="Q925F2"/>
    </source>
</evidence>
<evidence type="ECO:0000250" key="3">
    <source>
        <dbReference type="UniProtKB" id="Q96AP7"/>
    </source>
</evidence>
<evidence type="ECO:0000255" key="4"/>
<evidence type="ECO:0000255" key="5">
    <source>
        <dbReference type="PROSITE-ProRule" id="PRU00114"/>
    </source>
</evidence>
<evidence type="ECO:0000256" key="6">
    <source>
        <dbReference type="SAM" id="MobiDB-lite"/>
    </source>
</evidence>
<organism>
    <name type="scientific">Macaca fascicularis</name>
    <name type="common">Crab-eating macaque</name>
    <name type="synonym">Cynomolgus monkey</name>
    <dbReference type="NCBI Taxonomy" id="9541"/>
    <lineage>
        <taxon>Eukaryota</taxon>
        <taxon>Metazoa</taxon>
        <taxon>Chordata</taxon>
        <taxon>Craniata</taxon>
        <taxon>Vertebrata</taxon>
        <taxon>Euteleostomi</taxon>
        <taxon>Mammalia</taxon>
        <taxon>Eutheria</taxon>
        <taxon>Euarchontoglires</taxon>
        <taxon>Primates</taxon>
        <taxon>Haplorrhini</taxon>
        <taxon>Catarrhini</taxon>
        <taxon>Cercopithecidae</taxon>
        <taxon>Cercopithecinae</taxon>
        <taxon>Macaca</taxon>
    </lineage>
</organism>
<sequence length="390" mass="40946">MISLPGPLVTNLLRFLFLGLSALAPPSRAELQLHLPANQLQAVEGGEVVLPAWYTLHAEVSSAQPGEVPFVMWFFKDKEKEDQVLSYINGVTTSKPGVSLVYSMPSRNLSLRLEGLQEKDSGPYSCSVNVQDKNGQASGHSIKTLELNVLVPPAPPSCRLQGVPRVGANVTLSCQSPRSKPAVQYQWDRQLPSFQTFFAPVLDVIRGSLSLTNLSSSMAGVYVCKAHNEVGTAQCNVTLEVSTGPGAAVVAGAVVGTLVGLGLLAGLVLLYHRRGKALEEPANDIKEDAIAPRTLPWPKSSDTISKNGTLSSVTSARALRPPHGPPRPGALTPTPSLSSQALPSPRLPTTDGANPQPISLIPGGVSSSGLSRMGAVPVMVPAQSQAGSLV</sequence>
<protein>
    <recommendedName>
        <fullName>Endothelial cell-selective adhesion molecule</fullName>
    </recommendedName>
</protein>
<gene>
    <name type="primary">ESAM</name>
    <name type="ORF">QtrA-11419</name>
</gene>
<keyword id="KW-0130">Cell adhesion</keyword>
<keyword id="KW-0965">Cell junction</keyword>
<keyword id="KW-1003">Cell membrane</keyword>
<keyword id="KW-1015">Disulfide bond</keyword>
<keyword id="KW-0325">Glycoprotein</keyword>
<keyword id="KW-0393">Immunoglobulin domain</keyword>
<keyword id="KW-0472">Membrane</keyword>
<keyword id="KW-0597">Phosphoprotein</keyword>
<keyword id="KW-1185">Reference proteome</keyword>
<keyword id="KW-0677">Repeat</keyword>
<keyword id="KW-0732">Signal</keyword>
<keyword id="KW-0796">Tight junction</keyword>
<keyword id="KW-0812">Transmembrane</keyword>
<keyword id="KW-1133">Transmembrane helix</keyword>
<proteinExistence type="evidence at transcript level"/>
<dbReference type="EMBL" id="AB060855">
    <property type="protein sequence ID" value="BAB46874.1"/>
    <property type="molecule type" value="mRNA"/>
</dbReference>
<dbReference type="RefSeq" id="NP_001274219.1">
    <property type="nucleotide sequence ID" value="NM_001287290.1"/>
</dbReference>
<dbReference type="SMR" id="Q95KI3"/>
<dbReference type="STRING" id="9541.ENSMFAP00000046087"/>
<dbReference type="GlyCosmos" id="Q95KI3">
    <property type="glycosylation" value="4 sites, No reported glycans"/>
</dbReference>
<dbReference type="VEuPathDB" id="HostDB:ENSMFAG00000000739"/>
<dbReference type="eggNOG" id="ENOG502QRZ4">
    <property type="taxonomic scope" value="Eukaryota"/>
</dbReference>
<dbReference type="OMA" id="REMPFVM"/>
<dbReference type="Proteomes" id="UP000233100">
    <property type="component" value="Chromosome 14"/>
</dbReference>
<dbReference type="GO" id="GO:0005912">
    <property type="term" value="C:adherens junction"/>
    <property type="evidence" value="ECO:0007669"/>
    <property type="project" value="UniProtKB-SubCell"/>
</dbReference>
<dbReference type="GO" id="GO:0005923">
    <property type="term" value="C:bicellular tight junction"/>
    <property type="evidence" value="ECO:0007669"/>
    <property type="project" value="UniProtKB-SubCell"/>
</dbReference>
<dbReference type="GO" id="GO:0005886">
    <property type="term" value="C:plasma membrane"/>
    <property type="evidence" value="ECO:0000250"/>
    <property type="project" value="UniProtKB"/>
</dbReference>
<dbReference type="GO" id="GO:0098632">
    <property type="term" value="F:cell-cell adhesion mediator activity"/>
    <property type="evidence" value="ECO:0007669"/>
    <property type="project" value="TreeGrafter"/>
</dbReference>
<dbReference type="GO" id="GO:0007156">
    <property type="term" value="P:homophilic cell adhesion via plasma membrane adhesion molecules"/>
    <property type="evidence" value="ECO:0007669"/>
    <property type="project" value="TreeGrafter"/>
</dbReference>
<dbReference type="FunFam" id="2.60.40.10:FF:001675">
    <property type="entry name" value="Endothelial cell-selective adhesion molecule"/>
    <property type="match status" value="1"/>
</dbReference>
<dbReference type="FunFam" id="2.60.40.10:FF:000095">
    <property type="entry name" value="immunoglobulin superfamily member 11 isoform X1"/>
    <property type="match status" value="1"/>
</dbReference>
<dbReference type="Gene3D" id="2.60.40.10">
    <property type="entry name" value="Immunoglobulins"/>
    <property type="match status" value="2"/>
</dbReference>
<dbReference type="InterPro" id="IPR042757">
    <property type="entry name" value="ESAM"/>
</dbReference>
<dbReference type="InterPro" id="IPR007110">
    <property type="entry name" value="Ig-like_dom"/>
</dbReference>
<dbReference type="InterPro" id="IPR036179">
    <property type="entry name" value="Ig-like_dom_sf"/>
</dbReference>
<dbReference type="InterPro" id="IPR013783">
    <property type="entry name" value="Ig-like_fold"/>
</dbReference>
<dbReference type="InterPro" id="IPR003599">
    <property type="entry name" value="Ig_sub"/>
</dbReference>
<dbReference type="InterPro" id="IPR003598">
    <property type="entry name" value="Ig_sub2"/>
</dbReference>
<dbReference type="InterPro" id="IPR013106">
    <property type="entry name" value="Ig_V-set"/>
</dbReference>
<dbReference type="PANTHER" id="PTHR44549">
    <property type="entry name" value="ENDOTHELIAL CELL-SELECTIVE ADHESION MOLECULE"/>
    <property type="match status" value="1"/>
</dbReference>
<dbReference type="PANTHER" id="PTHR44549:SF1">
    <property type="entry name" value="ENDOTHELIAL CELL-SELECTIVE ADHESION MOLECULE"/>
    <property type="match status" value="1"/>
</dbReference>
<dbReference type="Pfam" id="PF13927">
    <property type="entry name" value="Ig_3"/>
    <property type="match status" value="1"/>
</dbReference>
<dbReference type="Pfam" id="PF07686">
    <property type="entry name" value="V-set"/>
    <property type="match status" value="1"/>
</dbReference>
<dbReference type="SMART" id="SM00409">
    <property type="entry name" value="IG"/>
    <property type="match status" value="2"/>
</dbReference>
<dbReference type="SMART" id="SM00408">
    <property type="entry name" value="IGc2"/>
    <property type="match status" value="1"/>
</dbReference>
<dbReference type="SUPFAM" id="SSF48726">
    <property type="entry name" value="Immunoglobulin"/>
    <property type="match status" value="2"/>
</dbReference>
<dbReference type="PROSITE" id="PS50835">
    <property type="entry name" value="IG_LIKE"/>
    <property type="match status" value="2"/>
</dbReference>
<comment type="function">
    <text evidence="2">Can mediate aggregation most likely through a homophilic molecular interaction.</text>
</comment>
<comment type="subunit">
    <text evidence="2">Interacts with MAGI1.</text>
</comment>
<comment type="subcellular location">
    <subcellularLocation>
        <location evidence="2">Cell junction</location>
        <location evidence="2">Adherens junction</location>
    </subcellularLocation>
    <subcellularLocation>
        <location evidence="2">Cell junction</location>
        <location evidence="2">Tight junction</location>
    </subcellularLocation>
    <subcellularLocation>
        <location evidence="3">Cell membrane</location>
        <topology evidence="2">Single-pass type I membrane protein</topology>
    </subcellularLocation>
</comment>
<accession>Q95KI3</accession>